<name>TCRM_VACCW</name>
<protein>
    <recommendedName>
        <fullName>Truncated Cytokine response-modifying protein B</fullName>
    </recommendedName>
</protein>
<proteinExistence type="predicted"/>
<gene>
    <name type="ordered locus">VACWR002</name>
</gene>
<gene>
    <name type="ordered locus">VACWR217</name>
</gene>
<organismHost>
    <name type="scientific">Bos taurus</name>
    <name type="common">Bovine</name>
    <dbReference type="NCBI Taxonomy" id="9913"/>
</organismHost>
<feature type="chain" id="PRO_0000412912" description="Truncated Cytokine response-modifying protein B">
    <location>
        <begin position="1"/>
        <end position="61"/>
    </location>
</feature>
<sequence length="61" mass="6865">MWKLICIQLTTTTGLSESISTSELTITMNHKDCNPVFREEYFSVLNKVATSGFFTGERCAL</sequence>
<comment type="function">
    <text>The protein is truncated in this strain and presumably inactive. It has similarities with variola virus CrmB, but the product is inactivated due to several premature stop codon.</text>
</comment>
<dbReference type="EMBL" id="AY243312">
    <property type="protein sequence ID" value="AAO89281.1"/>
    <property type="molecule type" value="Genomic_DNA"/>
</dbReference>
<dbReference type="EMBL" id="AY243312">
    <property type="protein sequence ID" value="AAO89496.1"/>
    <property type="molecule type" value="Genomic_DNA"/>
</dbReference>
<dbReference type="RefSeq" id="YP_232884.1">
    <property type="nucleotide sequence ID" value="NC_006998.1"/>
</dbReference>
<dbReference type="RefSeq" id="YP_233099.1">
    <property type="nucleotide sequence ID" value="NC_006998.1"/>
</dbReference>
<dbReference type="SMR" id="Q805P6"/>
<dbReference type="DNASU" id="3707617"/>
<dbReference type="GeneID" id="3707614"/>
<dbReference type="GeneID" id="3707617"/>
<dbReference type="KEGG" id="vg:3707614"/>
<dbReference type="KEGG" id="vg:3707617"/>
<dbReference type="Proteomes" id="UP000000344">
    <property type="component" value="Genome"/>
</dbReference>
<dbReference type="Gene3D" id="2.60.240.20">
    <property type="match status" value="1"/>
</dbReference>
<keyword id="KW-1185">Reference proteome</keyword>
<reference key="1">
    <citation type="submission" date="2003-02" db="EMBL/GenBank/DDBJ databases">
        <title>Sequencing of the coding region of Vaccinia-WR to an average 9-fold redundancy and an error rate of 0.16/10kb.</title>
        <authorList>
            <person name="Esposito J.J."/>
            <person name="Frace A.M."/>
            <person name="Sammons S.A."/>
            <person name="Olsen-Rasmussen M."/>
            <person name="Osborne J."/>
            <person name="Wohlhueter R."/>
        </authorList>
    </citation>
    <scope>NUCLEOTIDE SEQUENCE [GENOMIC DNA]</scope>
</reference>
<organism>
    <name type="scientific">Vaccinia virus (strain Western Reserve)</name>
    <name type="common">VACV</name>
    <name type="synonym">Vaccinia virus (strain WR)</name>
    <dbReference type="NCBI Taxonomy" id="10254"/>
    <lineage>
        <taxon>Viruses</taxon>
        <taxon>Varidnaviria</taxon>
        <taxon>Bamfordvirae</taxon>
        <taxon>Nucleocytoviricota</taxon>
        <taxon>Pokkesviricetes</taxon>
        <taxon>Chitovirales</taxon>
        <taxon>Poxviridae</taxon>
        <taxon>Chordopoxvirinae</taxon>
        <taxon>Orthopoxvirus</taxon>
        <taxon>Vaccinia virus</taxon>
    </lineage>
</organism>
<accession>Q805P6</accession>